<comment type="function">
    <text evidence="1">Channel that opens in response to stretch forces in the membrane lipid bilayer. May participate in the regulation of osmotic pressure changes within the cell.</text>
</comment>
<comment type="subunit">
    <text evidence="1">Homopentamer.</text>
</comment>
<comment type="subcellular location">
    <subcellularLocation>
        <location evidence="1">Cell inner membrane</location>
        <topology evidence="1">Multi-pass membrane protein</topology>
    </subcellularLocation>
</comment>
<comment type="similarity">
    <text evidence="1">Belongs to the MscL family.</text>
</comment>
<gene>
    <name evidence="1" type="primary">mscL</name>
    <name type="ordered locus">Shew185_3845</name>
</gene>
<proteinExistence type="inferred from homology"/>
<feature type="chain" id="PRO_1000015424" description="Large-conductance mechanosensitive channel">
    <location>
        <begin position="1"/>
        <end position="136"/>
    </location>
</feature>
<feature type="transmembrane region" description="Helical" evidence="1">
    <location>
        <begin position="9"/>
        <end position="29"/>
    </location>
</feature>
<feature type="transmembrane region" description="Helical" evidence="1">
    <location>
        <begin position="79"/>
        <end position="99"/>
    </location>
</feature>
<evidence type="ECO:0000255" key="1">
    <source>
        <dbReference type="HAMAP-Rule" id="MF_00115"/>
    </source>
</evidence>
<reference key="1">
    <citation type="submission" date="2007-07" db="EMBL/GenBank/DDBJ databases">
        <title>Complete sequence of chromosome of Shewanella baltica OS185.</title>
        <authorList>
            <consortium name="US DOE Joint Genome Institute"/>
            <person name="Copeland A."/>
            <person name="Lucas S."/>
            <person name="Lapidus A."/>
            <person name="Barry K."/>
            <person name="Glavina del Rio T."/>
            <person name="Dalin E."/>
            <person name="Tice H."/>
            <person name="Pitluck S."/>
            <person name="Sims D."/>
            <person name="Brettin T."/>
            <person name="Bruce D."/>
            <person name="Detter J.C."/>
            <person name="Han C."/>
            <person name="Schmutz J."/>
            <person name="Larimer F."/>
            <person name="Land M."/>
            <person name="Hauser L."/>
            <person name="Kyrpides N."/>
            <person name="Mikhailova N."/>
            <person name="Brettar I."/>
            <person name="Rodrigues J."/>
            <person name="Konstantinidis K."/>
            <person name="Tiedje J."/>
            <person name="Richardson P."/>
        </authorList>
    </citation>
    <scope>NUCLEOTIDE SEQUENCE [LARGE SCALE GENOMIC DNA]</scope>
    <source>
        <strain>OS185</strain>
    </source>
</reference>
<dbReference type="EMBL" id="CP000753">
    <property type="protein sequence ID" value="ABS09969.1"/>
    <property type="molecule type" value="Genomic_DNA"/>
</dbReference>
<dbReference type="RefSeq" id="WP_006084265.1">
    <property type="nucleotide sequence ID" value="NC_009665.1"/>
</dbReference>
<dbReference type="SMR" id="A6WT30"/>
<dbReference type="GeneID" id="11773971"/>
<dbReference type="KEGG" id="sbm:Shew185_3845"/>
<dbReference type="HOGENOM" id="CLU_095787_0_0_6"/>
<dbReference type="GO" id="GO:0005886">
    <property type="term" value="C:plasma membrane"/>
    <property type="evidence" value="ECO:0007669"/>
    <property type="project" value="UniProtKB-SubCell"/>
</dbReference>
<dbReference type="GO" id="GO:0008381">
    <property type="term" value="F:mechanosensitive monoatomic ion channel activity"/>
    <property type="evidence" value="ECO:0007669"/>
    <property type="project" value="UniProtKB-UniRule"/>
</dbReference>
<dbReference type="FunFam" id="1.10.1200.120:FF:000001">
    <property type="entry name" value="Large-conductance mechanosensitive channel"/>
    <property type="match status" value="1"/>
</dbReference>
<dbReference type="Gene3D" id="1.10.1200.120">
    <property type="entry name" value="Large-conductance mechanosensitive channel, MscL, domain 1"/>
    <property type="match status" value="1"/>
</dbReference>
<dbReference type="HAMAP" id="MF_00115">
    <property type="entry name" value="MscL"/>
    <property type="match status" value="1"/>
</dbReference>
<dbReference type="InterPro" id="IPR019823">
    <property type="entry name" value="Mechanosensitive_channel_CS"/>
</dbReference>
<dbReference type="InterPro" id="IPR001185">
    <property type="entry name" value="MS_channel"/>
</dbReference>
<dbReference type="InterPro" id="IPR037673">
    <property type="entry name" value="MSC/AndL"/>
</dbReference>
<dbReference type="InterPro" id="IPR036019">
    <property type="entry name" value="MscL_channel"/>
</dbReference>
<dbReference type="NCBIfam" id="TIGR00220">
    <property type="entry name" value="mscL"/>
    <property type="match status" value="1"/>
</dbReference>
<dbReference type="NCBIfam" id="NF001843">
    <property type="entry name" value="PRK00567.1-4"/>
    <property type="match status" value="1"/>
</dbReference>
<dbReference type="PANTHER" id="PTHR30266:SF2">
    <property type="entry name" value="LARGE-CONDUCTANCE MECHANOSENSITIVE CHANNEL"/>
    <property type="match status" value="1"/>
</dbReference>
<dbReference type="PANTHER" id="PTHR30266">
    <property type="entry name" value="MECHANOSENSITIVE CHANNEL MSCL"/>
    <property type="match status" value="1"/>
</dbReference>
<dbReference type="Pfam" id="PF01741">
    <property type="entry name" value="MscL"/>
    <property type="match status" value="1"/>
</dbReference>
<dbReference type="PRINTS" id="PR01264">
    <property type="entry name" value="MECHCHANNEL"/>
</dbReference>
<dbReference type="SUPFAM" id="SSF81330">
    <property type="entry name" value="Gated mechanosensitive channel"/>
    <property type="match status" value="1"/>
</dbReference>
<dbReference type="PROSITE" id="PS01327">
    <property type="entry name" value="MSCL"/>
    <property type="match status" value="1"/>
</dbReference>
<sequence>MSLIKEFKAFASRGNVIDMAVGIIIGAAFGKIVSSFVADIIMPPIGIILGGVNFSDLSIVLQAAQGDAPSVVIAYGKFIQTIIDFTIIAFAIFMGVKAINRLKRKEEVAPKAPAAPTKDQELLSEIRDLLKAQQEK</sequence>
<name>MSCL_SHEB8</name>
<organism>
    <name type="scientific">Shewanella baltica (strain OS185)</name>
    <dbReference type="NCBI Taxonomy" id="402882"/>
    <lineage>
        <taxon>Bacteria</taxon>
        <taxon>Pseudomonadati</taxon>
        <taxon>Pseudomonadota</taxon>
        <taxon>Gammaproteobacteria</taxon>
        <taxon>Alteromonadales</taxon>
        <taxon>Shewanellaceae</taxon>
        <taxon>Shewanella</taxon>
    </lineage>
</organism>
<accession>A6WT30</accession>
<protein>
    <recommendedName>
        <fullName evidence="1">Large-conductance mechanosensitive channel</fullName>
    </recommendedName>
</protein>
<keyword id="KW-0997">Cell inner membrane</keyword>
<keyword id="KW-1003">Cell membrane</keyword>
<keyword id="KW-0407">Ion channel</keyword>
<keyword id="KW-0406">Ion transport</keyword>
<keyword id="KW-0472">Membrane</keyword>
<keyword id="KW-0812">Transmembrane</keyword>
<keyword id="KW-1133">Transmembrane helix</keyword>
<keyword id="KW-0813">Transport</keyword>